<protein>
    <recommendedName>
        <fullName evidence="1">tRNA modification GTPase MnmE</fullName>
        <ecNumber evidence="1">3.6.-.-</ecNumber>
    </recommendedName>
</protein>
<accession>A6WUK3</accession>
<organism>
    <name type="scientific">Shewanella baltica (strain OS185)</name>
    <dbReference type="NCBI Taxonomy" id="402882"/>
    <lineage>
        <taxon>Bacteria</taxon>
        <taxon>Pseudomonadati</taxon>
        <taxon>Pseudomonadota</taxon>
        <taxon>Gammaproteobacteria</taxon>
        <taxon>Alteromonadales</taxon>
        <taxon>Shewanellaceae</taxon>
        <taxon>Shewanella</taxon>
    </lineage>
</organism>
<dbReference type="EC" id="3.6.-.-" evidence="1"/>
<dbReference type="EMBL" id="CP000753">
    <property type="protein sequence ID" value="ABS10492.1"/>
    <property type="molecule type" value="Genomic_DNA"/>
</dbReference>
<dbReference type="RefSeq" id="WP_012090676.1">
    <property type="nucleotide sequence ID" value="NC_009665.1"/>
</dbReference>
<dbReference type="SMR" id="A6WUK3"/>
<dbReference type="KEGG" id="sbm:Shew185_4378"/>
<dbReference type="HOGENOM" id="CLU_019624_4_1_6"/>
<dbReference type="GO" id="GO:0005829">
    <property type="term" value="C:cytosol"/>
    <property type="evidence" value="ECO:0007669"/>
    <property type="project" value="TreeGrafter"/>
</dbReference>
<dbReference type="GO" id="GO:0005525">
    <property type="term" value="F:GTP binding"/>
    <property type="evidence" value="ECO:0007669"/>
    <property type="project" value="UniProtKB-UniRule"/>
</dbReference>
<dbReference type="GO" id="GO:0003924">
    <property type="term" value="F:GTPase activity"/>
    <property type="evidence" value="ECO:0007669"/>
    <property type="project" value="UniProtKB-UniRule"/>
</dbReference>
<dbReference type="GO" id="GO:0046872">
    <property type="term" value="F:metal ion binding"/>
    <property type="evidence" value="ECO:0007669"/>
    <property type="project" value="UniProtKB-KW"/>
</dbReference>
<dbReference type="GO" id="GO:0030488">
    <property type="term" value="P:tRNA methylation"/>
    <property type="evidence" value="ECO:0007669"/>
    <property type="project" value="TreeGrafter"/>
</dbReference>
<dbReference type="GO" id="GO:0002098">
    <property type="term" value="P:tRNA wobble uridine modification"/>
    <property type="evidence" value="ECO:0007669"/>
    <property type="project" value="TreeGrafter"/>
</dbReference>
<dbReference type="CDD" id="cd04164">
    <property type="entry name" value="trmE"/>
    <property type="match status" value="1"/>
</dbReference>
<dbReference type="CDD" id="cd14858">
    <property type="entry name" value="TrmE_N"/>
    <property type="match status" value="1"/>
</dbReference>
<dbReference type="FunFam" id="3.30.1360.120:FF:000001">
    <property type="entry name" value="tRNA modification GTPase MnmE"/>
    <property type="match status" value="1"/>
</dbReference>
<dbReference type="FunFam" id="3.40.50.300:FF:000249">
    <property type="entry name" value="tRNA modification GTPase MnmE"/>
    <property type="match status" value="1"/>
</dbReference>
<dbReference type="Gene3D" id="3.40.50.300">
    <property type="entry name" value="P-loop containing nucleotide triphosphate hydrolases"/>
    <property type="match status" value="1"/>
</dbReference>
<dbReference type="Gene3D" id="3.30.1360.120">
    <property type="entry name" value="Probable tRNA modification gtpase trme, domain 1"/>
    <property type="match status" value="1"/>
</dbReference>
<dbReference type="Gene3D" id="1.20.120.430">
    <property type="entry name" value="tRNA modification GTPase MnmE domain 2"/>
    <property type="match status" value="1"/>
</dbReference>
<dbReference type="HAMAP" id="MF_00379">
    <property type="entry name" value="GTPase_MnmE"/>
    <property type="match status" value="1"/>
</dbReference>
<dbReference type="InterPro" id="IPR031168">
    <property type="entry name" value="G_TrmE"/>
</dbReference>
<dbReference type="InterPro" id="IPR006073">
    <property type="entry name" value="GTP-bd"/>
</dbReference>
<dbReference type="InterPro" id="IPR018948">
    <property type="entry name" value="GTP-bd_TrmE_N"/>
</dbReference>
<dbReference type="InterPro" id="IPR004520">
    <property type="entry name" value="GTPase_MnmE"/>
</dbReference>
<dbReference type="InterPro" id="IPR027368">
    <property type="entry name" value="MnmE_dom2"/>
</dbReference>
<dbReference type="InterPro" id="IPR025867">
    <property type="entry name" value="MnmE_helical"/>
</dbReference>
<dbReference type="InterPro" id="IPR027417">
    <property type="entry name" value="P-loop_NTPase"/>
</dbReference>
<dbReference type="InterPro" id="IPR005225">
    <property type="entry name" value="Small_GTP-bd"/>
</dbReference>
<dbReference type="InterPro" id="IPR027266">
    <property type="entry name" value="TrmE/GcvT_dom1"/>
</dbReference>
<dbReference type="NCBIfam" id="TIGR00450">
    <property type="entry name" value="mnmE_trmE_thdF"/>
    <property type="match status" value="1"/>
</dbReference>
<dbReference type="NCBIfam" id="NF003661">
    <property type="entry name" value="PRK05291.1-3"/>
    <property type="match status" value="1"/>
</dbReference>
<dbReference type="NCBIfam" id="TIGR00231">
    <property type="entry name" value="small_GTP"/>
    <property type="match status" value="1"/>
</dbReference>
<dbReference type="PANTHER" id="PTHR42714">
    <property type="entry name" value="TRNA MODIFICATION GTPASE GTPBP3"/>
    <property type="match status" value="1"/>
</dbReference>
<dbReference type="PANTHER" id="PTHR42714:SF2">
    <property type="entry name" value="TRNA MODIFICATION GTPASE GTPBP3, MITOCHONDRIAL"/>
    <property type="match status" value="1"/>
</dbReference>
<dbReference type="Pfam" id="PF01926">
    <property type="entry name" value="MMR_HSR1"/>
    <property type="match status" value="1"/>
</dbReference>
<dbReference type="Pfam" id="PF12631">
    <property type="entry name" value="MnmE_helical"/>
    <property type="match status" value="1"/>
</dbReference>
<dbReference type="Pfam" id="PF10396">
    <property type="entry name" value="TrmE_N"/>
    <property type="match status" value="1"/>
</dbReference>
<dbReference type="SUPFAM" id="SSF52540">
    <property type="entry name" value="P-loop containing nucleoside triphosphate hydrolases"/>
    <property type="match status" value="1"/>
</dbReference>
<dbReference type="SUPFAM" id="SSF116878">
    <property type="entry name" value="TrmE connector domain"/>
    <property type="match status" value="1"/>
</dbReference>
<dbReference type="PROSITE" id="PS51709">
    <property type="entry name" value="G_TRME"/>
    <property type="match status" value="1"/>
</dbReference>
<feature type="chain" id="PRO_1000048873" description="tRNA modification GTPase MnmE">
    <location>
        <begin position="1"/>
        <end position="453"/>
    </location>
</feature>
<feature type="domain" description="TrmE-type G">
    <location>
        <begin position="215"/>
        <end position="376"/>
    </location>
</feature>
<feature type="binding site" evidence="1">
    <location>
        <position position="22"/>
    </location>
    <ligand>
        <name>(6S)-5-formyl-5,6,7,8-tetrahydrofolate</name>
        <dbReference type="ChEBI" id="CHEBI:57457"/>
    </ligand>
</feature>
<feature type="binding site" evidence="1">
    <location>
        <position position="79"/>
    </location>
    <ligand>
        <name>(6S)-5-formyl-5,6,7,8-tetrahydrofolate</name>
        <dbReference type="ChEBI" id="CHEBI:57457"/>
    </ligand>
</feature>
<feature type="binding site" evidence="1">
    <location>
        <position position="119"/>
    </location>
    <ligand>
        <name>(6S)-5-formyl-5,6,7,8-tetrahydrofolate</name>
        <dbReference type="ChEBI" id="CHEBI:57457"/>
    </ligand>
</feature>
<feature type="binding site" evidence="1">
    <location>
        <begin position="225"/>
        <end position="230"/>
    </location>
    <ligand>
        <name>GTP</name>
        <dbReference type="ChEBI" id="CHEBI:37565"/>
    </ligand>
</feature>
<feature type="binding site" evidence="1">
    <location>
        <position position="225"/>
    </location>
    <ligand>
        <name>K(+)</name>
        <dbReference type="ChEBI" id="CHEBI:29103"/>
    </ligand>
</feature>
<feature type="binding site" evidence="1">
    <location>
        <position position="229"/>
    </location>
    <ligand>
        <name>Mg(2+)</name>
        <dbReference type="ChEBI" id="CHEBI:18420"/>
    </ligand>
</feature>
<feature type="binding site" evidence="1">
    <location>
        <begin position="244"/>
        <end position="250"/>
    </location>
    <ligand>
        <name>GTP</name>
        <dbReference type="ChEBI" id="CHEBI:37565"/>
    </ligand>
</feature>
<feature type="binding site" evidence="1">
    <location>
        <position position="244"/>
    </location>
    <ligand>
        <name>K(+)</name>
        <dbReference type="ChEBI" id="CHEBI:29103"/>
    </ligand>
</feature>
<feature type="binding site" evidence="1">
    <location>
        <position position="246"/>
    </location>
    <ligand>
        <name>K(+)</name>
        <dbReference type="ChEBI" id="CHEBI:29103"/>
    </ligand>
</feature>
<feature type="binding site" evidence="1">
    <location>
        <position position="249"/>
    </location>
    <ligand>
        <name>K(+)</name>
        <dbReference type="ChEBI" id="CHEBI:29103"/>
    </ligand>
</feature>
<feature type="binding site" evidence="1">
    <location>
        <position position="250"/>
    </location>
    <ligand>
        <name>Mg(2+)</name>
        <dbReference type="ChEBI" id="CHEBI:18420"/>
    </ligand>
</feature>
<feature type="binding site" evidence="1">
    <location>
        <begin position="269"/>
        <end position="272"/>
    </location>
    <ligand>
        <name>GTP</name>
        <dbReference type="ChEBI" id="CHEBI:37565"/>
    </ligand>
</feature>
<feature type="binding site" evidence="1">
    <location>
        <begin position="334"/>
        <end position="337"/>
    </location>
    <ligand>
        <name>GTP</name>
        <dbReference type="ChEBI" id="CHEBI:37565"/>
    </ligand>
</feature>
<feature type="binding site" evidence="1">
    <location>
        <position position="453"/>
    </location>
    <ligand>
        <name>(6S)-5-formyl-5,6,7,8-tetrahydrofolate</name>
        <dbReference type="ChEBI" id="CHEBI:57457"/>
    </ligand>
</feature>
<evidence type="ECO:0000255" key="1">
    <source>
        <dbReference type="HAMAP-Rule" id="MF_00379"/>
    </source>
</evidence>
<keyword id="KW-0963">Cytoplasm</keyword>
<keyword id="KW-0342">GTP-binding</keyword>
<keyword id="KW-0378">Hydrolase</keyword>
<keyword id="KW-0460">Magnesium</keyword>
<keyword id="KW-0479">Metal-binding</keyword>
<keyword id="KW-0547">Nucleotide-binding</keyword>
<keyword id="KW-0630">Potassium</keyword>
<keyword id="KW-0819">tRNA processing</keyword>
<reference key="1">
    <citation type="submission" date="2007-07" db="EMBL/GenBank/DDBJ databases">
        <title>Complete sequence of chromosome of Shewanella baltica OS185.</title>
        <authorList>
            <consortium name="US DOE Joint Genome Institute"/>
            <person name="Copeland A."/>
            <person name="Lucas S."/>
            <person name="Lapidus A."/>
            <person name="Barry K."/>
            <person name="Glavina del Rio T."/>
            <person name="Dalin E."/>
            <person name="Tice H."/>
            <person name="Pitluck S."/>
            <person name="Sims D."/>
            <person name="Brettin T."/>
            <person name="Bruce D."/>
            <person name="Detter J.C."/>
            <person name="Han C."/>
            <person name="Schmutz J."/>
            <person name="Larimer F."/>
            <person name="Land M."/>
            <person name="Hauser L."/>
            <person name="Kyrpides N."/>
            <person name="Mikhailova N."/>
            <person name="Brettar I."/>
            <person name="Rodrigues J."/>
            <person name="Konstantinidis K."/>
            <person name="Tiedje J."/>
            <person name="Richardson P."/>
        </authorList>
    </citation>
    <scope>NUCLEOTIDE SEQUENCE [LARGE SCALE GENOMIC DNA]</scope>
    <source>
        <strain>OS185</strain>
    </source>
</reference>
<name>MNME_SHEB8</name>
<sequence>MTTDTIVAQATAPGRGGVGIIRISGDKASDVAMAVLGHLPKTRYADYCDFKSASGQVIDQGIALFFKGPNSFTGEDVLELQGHGGQIVLDMLIKRVMEVGGIRIAKPGEFSEQAFMNDKLDLTQAEAIADLIDATSEQAAKSALQSLQGEFSKEVHELVDQVTNLRLYVEAAIDFPDEEVDFLSDGKIANALYKIIDKLDLVQASAKQGSIIREGMKVVIAGRPNAGKSSLLNALAGKESAIVTEIAGTTRDVLREHIHLDGMPLHIIDTAGLRDTTDTVEQIGIERAWNEINSADRVLFMVDGTTTAAVDPHTIWPDFVDRLPSNLGVTVIRNKADLTGEDLMMTEEQGYSVYRISAKTGLGVEELKQHLKSLMGYQSNLEGGFIARRRHLEALELAAGHLQLGKEQLEVYLAGELLAEELRMCQLALSEITGRFTSDDLLGKIFSSFCIGK</sequence>
<gene>
    <name evidence="1" type="primary">mnmE</name>
    <name evidence="1" type="synonym">trmE</name>
    <name type="ordered locus">Shew185_4378</name>
</gene>
<comment type="function">
    <text evidence="1">Exhibits a very high intrinsic GTPase hydrolysis rate. Involved in the addition of a carboxymethylaminomethyl (cmnm) group at the wobble position (U34) of certain tRNAs, forming tRNA-cmnm(5)s(2)U34.</text>
</comment>
<comment type="cofactor">
    <cofactor evidence="1">
        <name>K(+)</name>
        <dbReference type="ChEBI" id="CHEBI:29103"/>
    </cofactor>
    <text evidence="1">Binds 1 potassium ion per subunit.</text>
</comment>
<comment type="subunit">
    <text evidence="1">Homodimer. Heterotetramer of two MnmE and two MnmG subunits.</text>
</comment>
<comment type="subcellular location">
    <subcellularLocation>
        <location evidence="1">Cytoplasm</location>
    </subcellularLocation>
</comment>
<comment type="similarity">
    <text evidence="1">Belongs to the TRAFAC class TrmE-Era-EngA-EngB-Septin-like GTPase superfamily. TrmE GTPase family.</text>
</comment>
<proteinExistence type="inferred from homology"/>